<organism>
    <name type="scientific">Salmonella typhi</name>
    <dbReference type="NCBI Taxonomy" id="90370"/>
    <lineage>
        <taxon>Bacteria</taxon>
        <taxon>Pseudomonadati</taxon>
        <taxon>Pseudomonadota</taxon>
        <taxon>Gammaproteobacteria</taxon>
        <taxon>Enterobacterales</taxon>
        <taxon>Enterobacteriaceae</taxon>
        <taxon>Salmonella</taxon>
    </lineage>
</organism>
<dbReference type="EMBL" id="AL513382">
    <property type="protein sequence ID" value="CAD09475.1"/>
    <property type="molecule type" value="Genomic_DNA"/>
</dbReference>
<dbReference type="EMBL" id="AE014613">
    <property type="protein sequence ID" value="AAO70978.1"/>
    <property type="molecule type" value="Genomic_DNA"/>
</dbReference>
<dbReference type="RefSeq" id="NP_457905.1">
    <property type="nucleotide sequence ID" value="NC_003198.1"/>
</dbReference>
<dbReference type="RefSeq" id="WP_000940092.1">
    <property type="nucleotide sequence ID" value="NZ_WSUR01000043.1"/>
</dbReference>
<dbReference type="SMR" id="P0A1U5"/>
<dbReference type="STRING" id="220341.gene:17587576"/>
<dbReference type="KEGG" id="stt:t3462"/>
<dbReference type="KEGG" id="sty:STY3716"/>
<dbReference type="PATRIC" id="fig|220341.7.peg.3788"/>
<dbReference type="eggNOG" id="COG3068">
    <property type="taxonomic scope" value="Bacteria"/>
</dbReference>
<dbReference type="HOGENOM" id="CLU_096082_0_0_6"/>
<dbReference type="OMA" id="FYGVYPA"/>
<dbReference type="OrthoDB" id="9204516at2"/>
<dbReference type="Proteomes" id="UP000000541">
    <property type="component" value="Chromosome"/>
</dbReference>
<dbReference type="Proteomes" id="UP000002670">
    <property type="component" value="Chromosome"/>
</dbReference>
<dbReference type="FunFam" id="1.20.1590.10:FF:000001">
    <property type="entry name" value="DUF416 family protein"/>
    <property type="match status" value="1"/>
</dbReference>
<dbReference type="Gene3D" id="1.20.1590.10">
    <property type="entry name" value="YP_001051499.1 domain like"/>
    <property type="match status" value="1"/>
</dbReference>
<dbReference type="InterPro" id="IPR007338">
    <property type="entry name" value="DUF416"/>
</dbReference>
<dbReference type="InterPro" id="IPR023381">
    <property type="entry name" value="YP001051499.1-like_dom_sf"/>
</dbReference>
<dbReference type="Pfam" id="PF04222">
    <property type="entry name" value="DUF416"/>
    <property type="match status" value="1"/>
</dbReference>
<protein>
    <recommendedName>
        <fullName>Uncharacterized protein YjaG</fullName>
    </recommendedName>
</protein>
<feature type="chain" id="PRO_0000169703" description="Uncharacterized protein YjaG">
    <location>
        <begin position="1"/>
        <end position="196"/>
    </location>
</feature>
<evidence type="ECO:0000305" key="1"/>
<proteinExistence type="predicted"/>
<gene>
    <name type="primary">yjaG</name>
    <name type="ordered locus">STY3716</name>
    <name type="ordered locus">t3462</name>
</gene>
<reference key="1">
    <citation type="journal article" date="2001" name="Nature">
        <title>Complete genome sequence of a multiple drug resistant Salmonella enterica serovar Typhi CT18.</title>
        <authorList>
            <person name="Parkhill J."/>
            <person name="Dougan G."/>
            <person name="James K.D."/>
            <person name="Thomson N.R."/>
            <person name="Pickard D."/>
            <person name="Wain J."/>
            <person name="Churcher C.M."/>
            <person name="Mungall K.L."/>
            <person name="Bentley S.D."/>
            <person name="Holden M.T.G."/>
            <person name="Sebaihia M."/>
            <person name="Baker S."/>
            <person name="Basham D."/>
            <person name="Brooks K."/>
            <person name="Chillingworth T."/>
            <person name="Connerton P."/>
            <person name="Cronin A."/>
            <person name="Davis P."/>
            <person name="Davies R.M."/>
            <person name="Dowd L."/>
            <person name="White N."/>
            <person name="Farrar J."/>
            <person name="Feltwell T."/>
            <person name="Hamlin N."/>
            <person name="Haque A."/>
            <person name="Hien T.T."/>
            <person name="Holroyd S."/>
            <person name="Jagels K."/>
            <person name="Krogh A."/>
            <person name="Larsen T.S."/>
            <person name="Leather S."/>
            <person name="Moule S."/>
            <person name="O'Gaora P."/>
            <person name="Parry C."/>
            <person name="Quail M.A."/>
            <person name="Rutherford K.M."/>
            <person name="Simmonds M."/>
            <person name="Skelton J."/>
            <person name="Stevens K."/>
            <person name="Whitehead S."/>
            <person name="Barrell B.G."/>
        </authorList>
    </citation>
    <scope>NUCLEOTIDE SEQUENCE [LARGE SCALE GENOMIC DNA]</scope>
    <source>
        <strain>CT18</strain>
    </source>
</reference>
<reference key="2">
    <citation type="journal article" date="2003" name="J. Bacteriol.">
        <title>Comparative genomics of Salmonella enterica serovar Typhi strains Ty2 and CT18.</title>
        <authorList>
            <person name="Deng W."/>
            <person name="Liou S.-R."/>
            <person name="Plunkett G. III"/>
            <person name="Mayhew G.F."/>
            <person name="Rose D.J."/>
            <person name="Burland V."/>
            <person name="Kodoyianni V."/>
            <person name="Schwartz D.C."/>
            <person name="Blattner F.R."/>
        </authorList>
    </citation>
    <scope>NUCLEOTIDE SEQUENCE [LARGE SCALE GENOMIC DNA]</scope>
    <source>
        <strain>ATCC 700931 / Ty2</strain>
    </source>
</reference>
<accession>P0A1U5</accession>
<accession>Q9L9I2</accession>
<name>YJAG_SALTI</name>
<sequence length="196" mass="22704">MLQNPIHLRLERLESWQHVTFMACLCERMYPNYAMFCKQTEFGDGQIYRRILDLIWETLTVKDAKVNFDSQLEKFEEAIPAADDYDLYGVYPAIDACVALSELMHSRLSGETLEHAIEVSKTSITTVAMLEMTQAGREMTDEELKTNPAVEQEWDIQWEIFRLLADCEERDIELIKGLRADLREAGESNIGINFQQ</sequence>
<comment type="similarity">
    <text evidence="1">To H.influenzae HI_0431.</text>
</comment>